<comment type="function">
    <text evidence="1">Binds directly to 23S ribosomal RNA and is necessary for the in vitro assembly process of the 50S ribosomal subunit. It is not involved in the protein synthesizing functions of that subunit.</text>
</comment>
<comment type="similarity">
    <text evidence="1">Belongs to the bacterial ribosomal protein bL20 family.</text>
</comment>
<sequence length="116" mass="13316">MARVKRGNVARKRRNKILKLAKGFRSGNSKLFRTANQRVMKALTNAYRDRRRRKRDFRRLWIARINAAARLHGVSYSRLIGALKKADIQINRKMLAQLAVLDSAGFKAIVDLALKA</sequence>
<dbReference type="EMBL" id="AP008231">
    <property type="protein sequence ID" value="BAD78465.1"/>
    <property type="molecule type" value="Genomic_DNA"/>
</dbReference>
<dbReference type="RefSeq" id="WP_011242589.1">
    <property type="nucleotide sequence ID" value="NZ_CP085785.1"/>
</dbReference>
<dbReference type="SMR" id="Q5N5F3"/>
<dbReference type="GeneID" id="72430138"/>
<dbReference type="KEGG" id="syc:syc0275_d"/>
<dbReference type="eggNOG" id="COG0292">
    <property type="taxonomic scope" value="Bacteria"/>
</dbReference>
<dbReference type="Proteomes" id="UP000001175">
    <property type="component" value="Chromosome"/>
</dbReference>
<dbReference type="GO" id="GO:1990904">
    <property type="term" value="C:ribonucleoprotein complex"/>
    <property type="evidence" value="ECO:0007669"/>
    <property type="project" value="UniProtKB-KW"/>
</dbReference>
<dbReference type="GO" id="GO:0005840">
    <property type="term" value="C:ribosome"/>
    <property type="evidence" value="ECO:0007669"/>
    <property type="project" value="UniProtKB-KW"/>
</dbReference>
<dbReference type="GO" id="GO:0019843">
    <property type="term" value="F:rRNA binding"/>
    <property type="evidence" value="ECO:0007669"/>
    <property type="project" value="UniProtKB-UniRule"/>
</dbReference>
<dbReference type="GO" id="GO:0003735">
    <property type="term" value="F:structural constituent of ribosome"/>
    <property type="evidence" value="ECO:0007669"/>
    <property type="project" value="InterPro"/>
</dbReference>
<dbReference type="GO" id="GO:0000027">
    <property type="term" value="P:ribosomal large subunit assembly"/>
    <property type="evidence" value="ECO:0007669"/>
    <property type="project" value="UniProtKB-UniRule"/>
</dbReference>
<dbReference type="GO" id="GO:0006412">
    <property type="term" value="P:translation"/>
    <property type="evidence" value="ECO:0007669"/>
    <property type="project" value="InterPro"/>
</dbReference>
<dbReference type="CDD" id="cd07026">
    <property type="entry name" value="Ribosomal_L20"/>
    <property type="match status" value="1"/>
</dbReference>
<dbReference type="FunFam" id="1.10.1900.20:FF:000001">
    <property type="entry name" value="50S ribosomal protein L20"/>
    <property type="match status" value="1"/>
</dbReference>
<dbReference type="Gene3D" id="6.10.160.10">
    <property type="match status" value="1"/>
</dbReference>
<dbReference type="Gene3D" id="1.10.1900.20">
    <property type="entry name" value="Ribosomal protein L20"/>
    <property type="match status" value="1"/>
</dbReference>
<dbReference type="HAMAP" id="MF_00382">
    <property type="entry name" value="Ribosomal_bL20"/>
    <property type="match status" value="1"/>
</dbReference>
<dbReference type="InterPro" id="IPR005813">
    <property type="entry name" value="Ribosomal_bL20"/>
</dbReference>
<dbReference type="InterPro" id="IPR049946">
    <property type="entry name" value="RIBOSOMAL_L20_CS"/>
</dbReference>
<dbReference type="InterPro" id="IPR035566">
    <property type="entry name" value="Ribosomal_protein_bL20_C"/>
</dbReference>
<dbReference type="NCBIfam" id="TIGR01032">
    <property type="entry name" value="rplT_bact"/>
    <property type="match status" value="1"/>
</dbReference>
<dbReference type="PANTHER" id="PTHR10986">
    <property type="entry name" value="39S RIBOSOMAL PROTEIN L20"/>
    <property type="match status" value="1"/>
</dbReference>
<dbReference type="Pfam" id="PF00453">
    <property type="entry name" value="Ribosomal_L20"/>
    <property type="match status" value="1"/>
</dbReference>
<dbReference type="PRINTS" id="PR00062">
    <property type="entry name" value="RIBOSOMALL20"/>
</dbReference>
<dbReference type="SUPFAM" id="SSF74731">
    <property type="entry name" value="Ribosomal protein L20"/>
    <property type="match status" value="1"/>
</dbReference>
<dbReference type="PROSITE" id="PS00937">
    <property type="entry name" value="RIBOSOMAL_L20"/>
    <property type="match status" value="1"/>
</dbReference>
<feature type="chain" id="PRO_0000243745" description="Large ribosomal subunit protein bL20">
    <location>
        <begin position="1"/>
        <end position="116"/>
    </location>
</feature>
<proteinExistence type="inferred from homology"/>
<name>RL20_SYNP6</name>
<evidence type="ECO:0000255" key="1">
    <source>
        <dbReference type="HAMAP-Rule" id="MF_00382"/>
    </source>
</evidence>
<evidence type="ECO:0000305" key="2"/>
<accession>Q5N5F3</accession>
<organism>
    <name type="scientific">Synechococcus sp. (strain ATCC 27144 / PCC 6301 / SAUG 1402/1)</name>
    <name type="common">Anacystis nidulans</name>
    <dbReference type="NCBI Taxonomy" id="269084"/>
    <lineage>
        <taxon>Bacteria</taxon>
        <taxon>Bacillati</taxon>
        <taxon>Cyanobacteriota</taxon>
        <taxon>Cyanophyceae</taxon>
        <taxon>Synechococcales</taxon>
        <taxon>Synechococcaceae</taxon>
        <taxon>Synechococcus</taxon>
    </lineage>
</organism>
<gene>
    <name evidence="1" type="primary">rplT</name>
    <name evidence="1" type="synonym">rpl20</name>
    <name type="ordered locus">syc0275_d</name>
</gene>
<keyword id="KW-0687">Ribonucleoprotein</keyword>
<keyword id="KW-0689">Ribosomal protein</keyword>
<keyword id="KW-0694">RNA-binding</keyword>
<keyword id="KW-0699">rRNA-binding</keyword>
<protein>
    <recommendedName>
        <fullName evidence="1">Large ribosomal subunit protein bL20</fullName>
    </recommendedName>
    <alternativeName>
        <fullName evidence="2">50S ribosomal protein L20</fullName>
    </alternativeName>
</protein>
<reference key="1">
    <citation type="journal article" date="2007" name="Photosyn. Res.">
        <title>Complete nucleotide sequence of the freshwater unicellular cyanobacterium Synechococcus elongatus PCC 6301 chromosome: gene content and organization.</title>
        <authorList>
            <person name="Sugita C."/>
            <person name="Ogata K."/>
            <person name="Shikata M."/>
            <person name="Jikuya H."/>
            <person name="Takano J."/>
            <person name="Furumichi M."/>
            <person name="Kanehisa M."/>
            <person name="Omata T."/>
            <person name="Sugiura M."/>
            <person name="Sugita M."/>
        </authorList>
    </citation>
    <scope>NUCLEOTIDE SEQUENCE [LARGE SCALE GENOMIC DNA]</scope>
    <source>
        <strain>ATCC 27144 / PCC 6301 / SAUG 1402/1</strain>
    </source>
</reference>